<dbReference type="EC" id="4.2.1.134" evidence="2"/>
<dbReference type="EMBL" id="BC151339">
    <property type="protein sequence ID" value="AAI51340.1"/>
    <property type="molecule type" value="mRNA"/>
</dbReference>
<dbReference type="RefSeq" id="NP_001096786.1">
    <property type="nucleotide sequence ID" value="NM_001103316.1"/>
</dbReference>
<dbReference type="SMR" id="A7YY55"/>
<dbReference type="FunCoup" id="A7YY55">
    <property type="interactions" value="1399"/>
</dbReference>
<dbReference type="STRING" id="9913.ENSBTAP00000036401"/>
<dbReference type="PaxDb" id="9913-ENSBTAP00000036401"/>
<dbReference type="Ensembl" id="ENSBTAT00000117037.1">
    <property type="protein sequence ID" value="ENSBTAP00000101335.1"/>
    <property type="gene ID" value="ENSBTAG00000015155.7"/>
</dbReference>
<dbReference type="GeneID" id="100125237"/>
<dbReference type="KEGG" id="bta:100125237"/>
<dbReference type="CTD" id="51495"/>
<dbReference type="VEuPathDB" id="HostDB:ENSBTAG00000015155"/>
<dbReference type="VGNC" id="VGNC:29738">
    <property type="gene designation" value="HACD3"/>
</dbReference>
<dbReference type="eggNOG" id="KOG3187">
    <property type="taxonomic scope" value="Eukaryota"/>
</dbReference>
<dbReference type="GeneTree" id="ENSGT00530000062962"/>
<dbReference type="HOGENOM" id="CLU_046712_0_0_1"/>
<dbReference type="InParanoid" id="A7YY55"/>
<dbReference type="OMA" id="SYLVMSH"/>
<dbReference type="OrthoDB" id="2157530at2759"/>
<dbReference type="TreeFam" id="TF313326"/>
<dbReference type="Reactome" id="R-BTA-75876">
    <property type="pathway name" value="Synthesis of very long-chain fatty acyl-CoAs"/>
</dbReference>
<dbReference type="UniPathway" id="UPA00094"/>
<dbReference type="Proteomes" id="UP000009136">
    <property type="component" value="Chromosome 10"/>
</dbReference>
<dbReference type="Bgee" id="ENSBTAG00000015155">
    <property type="expression patterns" value="Expressed in corpus epididymis and 106 other cell types or tissues"/>
</dbReference>
<dbReference type="GO" id="GO:0005783">
    <property type="term" value="C:endoplasmic reticulum"/>
    <property type="evidence" value="ECO:0000250"/>
    <property type="project" value="UniProtKB"/>
</dbReference>
<dbReference type="GO" id="GO:0005789">
    <property type="term" value="C:endoplasmic reticulum membrane"/>
    <property type="evidence" value="ECO:0000318"/>
    <property type="project" value="GO_Central"/>
</dbReference>
<dbReference type="GO" id="GO:0018812">
    <property type="term" value="F:3-hydroxyacyl-CoA dehydratase activity"/>
    <property type="evidence" value="ECO:0000318"/>
    <property type="project" value="GO_Central"/>
</dbReference>
<dbReference type="GO" id="GO:0019899">
    <property type="term" value="F:enzyme binding"/>
    <property type="evidence" value="ECO:0000250"/>
    <property type="project" value="UniProtKB"/>
</dbReference>
<dbReference type="GO" id="GO:0102158">
    <property type="term" value="F:very-long-chain (3R)-3-hydroxyacyl-CoA dehydratase activity"/>
    <property type="evidence" value="ECO:0000250"/>
    <property type="project" value="UniProtKB"/>
</dbReference>
<dbReference type="GO" id="GO:0030497">
    <property type="term" value="P:fatty acid elongation"/>
    <property type="evidence" value="ECO:0000250"/>
    <property type="project" value="UniProtKB"/>
</dbReference>
<dbReference type="GO" id="GO:0030148">
    <property type="term" value="P:sphingolipid biosynthetic process"/>
    <property type="evidence" value="ECO:0000318"/>
    <property type="project" value="GO_Central"/>
</dbReference>
<dbReference type="GO" id="GO:0042761">
    <property type="term" value="P:very long-chain fatty acid biosynthetic process"/>
    <property type="evidence" value="ECO:0000250"/>
    <property type="project" value="UniProtKB"/>
</dbReference>
<dbReference type="CDD" id="cd06465">
    <property type="entry name" value="p23_hB-ind1_like"/>
    <property type="match status" value="1"/>
</dbReference>
<dbReference type="FunFam" id="2.60.40.790:FF:000048">
    <property type="entry name" value="Very-long-chain (3R)-3-hydroxyacyl-CoA dehydratase"/>
    <property type="match status" value="1"/>
</dbReference>
<dbReference type="Gene3D" id="2.60.40.790">
    <property type="match status" value="1"/>
</dbReference>
<dbReference type="InterPro" id="IPR007052">
    <property type="entry name" value="CS_dom"/>
</dbReference>
<dbReference type="InterPro" id="IPR008978">
    <property type="entry name" value="HSP20-like_chaperone"/>
</dbReference>
<dbReference type="InterPro" id="IPR007482">
    <property type="entry name" value="Tyr_Pase-like_PTPLA"/>
</dbReference>
<dbReference type="PANTHER" id="PTHR11035">
    <property type="entry name" value="VERY-LONG-CHAIN (3R)-3-HYDROXYACYL-COA DEHYDRATASE"/>
    <property type="match status" value="1"/>
</dbReference>
<dbReference type="PANTHER" id="PTHR11035:SF20">
    <property type="entry name" value="VERY-LONG-CHAIN (3R)-3-HYDROXYACYL-COA DEHYDRATASE 3"/>
    <property type="match status" value="1"/>
</dbReference>
<dbReference type="Pfam" id="PF04387">
    <property type="entry name" value="PTPLA"/>
    <property type="match status" value="1"/>
</dbReference>
<dbReference type="SUPFAM" id="SSF49764">
    <property type="entry name" value="HSP20-like chaperones"/>
    <property type="match status" value="1"/>
</dbReference>
<dbReference type="PROSITE" id="PS51203">
    <property type="entry name" value="CS"/>
    <property type="match status" value="1"/>
</dbReference>
<organism>
    <name type="scientific">Bos taurus</name>
    <name type="common">Bovine</name>
    <dbReference type="NCBI Taxonomy" id="9913"/>
    <lineage>
        <taxon>Eukaryota</taxon>
        <taxon>Metazoa</taxon>
        <taxon>Chordata</taxon>
        <taxon>Craniata</taxon>
        <taxon>Vertebrata</taxon>
        <taxon>Euteleostomi</taxon>
        <taxon>Mammalia</taxon>
        <taxon>Eutheria</taxon>
        <taxon>Laurasiatheria</taxon>
        <taxon>Artiodactyla</taxon>
        <taxon>Ruminantia</taxon>
        <taxon>Pecora</taxon>
        <taxon>Bovidae</taxon>
        <taxon>Bovinae</taxon>
        <taxon>Bos</taxon>
    </lineage>
</organism>
<accession>A7YY55</accession>
<reference key="1">
    <citation type="submission" date="2007-07" db="EMBL/GenBank/DDBJ databases">
        <authorList>
            <consortium name="NIH - Mammalian Gene Collection (MGC) project"/>
        </authorList>
    </citation>
    <scope>NUCLEOTIDE SEQUENCE [LARGE SCALE MRNA]</scope>
    <source>
        <strain>Hereford</strain>
        <tissue>Thalamus</tissue>
    </source>
</reference>
<protein>
    <recommendedName>
        <fullName evidence="5">Very-long-chain (3R)-3-hydroxyacyl-CoA dehydratase 3</fullName>
        <ecNumber evidence="2">4.2.1.134</ecNumber>
    </recommendedName>
    <alternativeName>
        <fullName evidence="5">3-hydroxyacyl-CoA dehydratase 3</fullName>
        <shortName evidence="5">HACD3</shortName>
    </alternativeName>
    <alternativeName>
        <fullName evidence="5">Protein-tyrosine phosphatase-like A domain-containing protein 1</fullName>
    </alternativeName>
</protein>
<feature type="chain" id="PRO_0000313723" description="Very-long-chain (3R)-3-hydroxyacyl-CoA dehydratase 3">
    <location>
        <begin position="1"/>
        <end position="362"/>
    </location>
</feature>
<feature type="topological domain" description="Cytoplasmic" evidence="3">
    <location>
        <begin position="1"/>
        <end position="149"/>
    </location>
</feature>
<feature type="transmembrane region" description="Helical" evidence="3">
    <location>
        <begin position="150"/>
        <end position="170"/>
    </location>
</feature>
<feature type="topological domain" description="Lumenal" evidence="3">
    <location>
        <begin position="171"/>
        <end position="189"/>
    </location>
</feature>
<feature type="transmembrane region" description="Helical" evidence="3">
    <location>
        <begin position="190"/>
        <end position="210"/>
    </location>
</feature>
<feature type="topological domain" description="Cytoplasmic" evidence="3">
    <location>
        <begin position="211"/>
        <end position="212"/>
    </location>
</feature>
<feature type="transmembrane region" description="Helical" evidence="3">
    <location>
        <begin position="213"/>
        <end position="233"/>
    </location>
</feature>
<feature type="topological domain" description="Lumenal" evidence="3">
    <location>
        <begin position="234"/>
        <end position="242"/>
    </location>
</feature>
<feature type="transmembrane region" description="Helical" evidence="3">
    <location>
        <begin position="243"/>
        <end position="263"/>
    </location>
</feature>
<feature type="topological domain" description="Cytoplasmic" evidence="3">
    <location>
        <begin position="264"/>
        <end position="280"/>
    </location>
</feature>
<feature type="transmembrane region" description="Helical" evidence="3">
    <location>
        <begin position="281"/>
        <end position="301"/>
    </location>
</feature>
<feature type="topological domain" description="Lumenal" evidence="3">
    <location>
        <begin position="302"/>
        <end position="325"/>
    </location>
</feature>
<feature type="transmembrane region" description="Helical" evidence="3">
    <location>
        <begin position="326"/>
        <end position="346"/>
    </location>
</feature>
<feature type="topological domain" description="Cytoplasmic" evidence="3">
    <location>
        <begin position="347"/>
        <end position="362"/>
    </location>
</feature>
<feature type="domain" description="CS" evidence="4">
    <location>
        <begin position="5"/>
        <end position="94"/>
    </location>
</feature>
<feature type="coiled-coil region" evidence="3">
    <location>
        <begin position="111"/>
        <end position="136"/>
    </location>
</feature>
<feature type="active site" evidence="1">
    <location>
        <position position="286"/>
    </location>
</feature>
<feature type="active site" evidence="1">
    <location>
        <position position="293"/>
    </location>
</feature>
<feature type="modified residue" description="N-acetylmethionine" evidence="2">
    <location>
        <position position="1"/>
    </location>
</feature>
<feature type="modified residue" description="Phosphothreonine" evidence="2">
    <location>
        <position position="7"/>
    </location>
</feature>
<feature type="modified residue" description="Phosphoserine" evidence="2">
    <location>
        <position position="114"/>
    </location>
</feature>
<feature type="modified residue" description="Phosphoserine" evidence="2">
    <location>
        <position position="135"/>
    </location>
</feature>
<keyword id="KW-0007">Acetylation</keyword>
<keyword id="KW-0175">Coiled coil</keyword>
<keyword id="KW-0256">Endoplasmic reticulum</keyword>
<keyword id="KW-0275">Fatty acid biosynthesis</keyword>
<keyword id="KW-0276">Fatty acid metabolism</keyword>
<keyword id="KW-0444">Lipid biosynthesis</keyword>
<keyword id="KW-0443">Lipid metabolism</keyword>
<keyword id="KW-0456">Lyase</keyword>
<keyword id="KW-0472">Membrane</keyword>
<keyword id="KW-0597">Phosphoprotein</keyword>
<keyword id="KW-1185">Reference proteome</keyword>
<keyword id="KW-0812">Transmembrane</keyword>
<keyword id="KW-1133">Transmembrane helix</keyword>
<gene>
    <name evidence="5" type="primary">HACD3</name>
    <name evidence="5" type="synonym">PTPLAD1</name>
</gene>
<evidence type="ECO:0000250" key="1">
    <source>
        <dbReference type="UniProtKB" id="P40857"/>
    </source>
</evidence>
<evidence type="ECO:0000250" key="2">
    <source>
        <dbReference type="UniProtKB" id="Q9P035"/>
    </source>
</evidence>
<evidence type="ECO:0000255" key="3"/>
<evidence type="ECO:0000255" key="4">
    <source>
        <dbReference type="PROSITE-ProRule" id="PRU00547"/>
    </source>
</evidence>
<evidence type="ECO:0000305" key="5"/>
<proteinExistence type="evidence at transcript level"/>
<name>HACD3_BOVIN</name>
<sequence>MENQVLTPHVYWAQRHHELYLRVELSDVQNPAISITENVLHFKAQGHGAKGDNVYEFHLEFLDLVKPEPVYKLTQRQVNITVQKKESQWWERLTKQEKRPLFLAPDFDRWLDESDAEMELRAKEEEQLNKLRLESQGSPETLTSLKKGYLFMYNLVQFLGFSWIFVNMTVRFFILGKESFYDTFHTVADMMYFCQMLAAVESINAAIGVTKSPVVPSLFQLLGRNFILFIIFGTMEEMQNKAVVFFVFYIWSTVEIFRYPFYMLSCIDMDWKVLTWLRYTVWIPLYPMGCLAEAVSVIQSIPVFNETGRFSFTLPYPVKIKVRFSFFLQIYLILLFLGLYVNFRYLYKQRRRRFGQKKKKIH</sequence>
<comment type="function">
    <text evidence="2">Catalyzes the third of the four reactions of the long-chain fatty acids elongation cycle. This endoplasmic reticulum-bound enzymatic process, allows the addition of two carbons to the chain of long- and very long-chain fatty acids/VLCFAs per cycle. This enzyme catalyzes the dehydration of the 3-hydroxyacyl-CoA intermediate into trans-2,3-enoyl-CoA, within each cycle of fatty acid elongation. Thereby, it participates in the production of VLCFAs of different chain lengths that are involved in multiple biological processes as precursors of membrane lipids and lipid mediators. Involved in Rac1-signaling pathways leading to the modulation of gene expression. Promotes insulin receptor/INSR autophosphorylation and is involved in INSR internalization (By similarity).</text>
</comment>
<comment type="catalytic activity">
    <reaction evidence="2">
        <text>a very-long-chain (3R)-3-hydroxyacyl-CoA = a very-long-chain (2E)-enoyl-CoA + H2O</text>
        <dbReference type="Rhea" id="RHEA:45812"/>
        <dbReference type="ChEBI" id="CHEBI:15377"/>
        <dbReference type="ChEBI" id="CHEBI:83728"/>
        <dbReference type="ChEBI" id="CHEBI:85440"/>
        <dbReference type="EC" id="4.2.1.134"/>
    </reaction>
    <physiologicalReaction direction="left-to-right" evidence="2">
        <dbReference type="Rhea" id="RHEA:45813"/>
    </physiologicalReaction>
</comment>
<comment type="catalytic activity">
    <reaction evidence="2">
        <text>(3R)-hydroxyhexadecanoyl-CoA = (2E)-hexadecenoyl-CoA + H2O</text>
        <dbReference type="Rhea" id="RHEA:39159"/>
        <dbReference type="ChEBI" id="CHEBI:15377"/>
        <dbReference type="ChEBI" id="CHEBI:61526"/>
        <dbReference type="ChEBI" id="CHEBI:74278"/>
    </reaction>
    <physiologicalReaction direction="left-to-right" evidence="2">
        <dbReference type="Rhea" id="RHEA:39160"/>
    </physiologicalReaction>
</comment>
<comment type="pathway">
    <text evidence="2">Lipid metabolism; fatty acid biosynthesis.</text>
</comment>
<comment type="subunit">
    <text evidence="2">May interact with enzymes of the ELO family (including ELOVL1); with those enzymes that mediate condensation, the first of the four steps of the reaction cycle responsible for fatty acids elongation, may be part of a larger fatty acids elongase complex. Interacts with RAC1. Associates with internalized insulin receptor/INSR complexes on Golgi/endosomal membranes; HACD3/PTPLAD1 together with ATIC and PRKAA2/AMPK2 is proposed to be part of a signaling network regulating INSR autophosphorylation and endocytosis (By similarity).</text>
</comment>
<comment type="subcellular location">
    <subcellularLocation>
        <location evidence="2">Endoplasmic reticulum membrane</location>
        <topology evidence="2">Multi-pass membrane protein</topology>
    </subcellularLocation>
</comment>
<comment type="similarity">
    <text evidence="5">Belongs to the very long-chain fatty acids dehydratase HACD family.</text>
</comment>
<comment type="caution">
    <text evidence="2">Shares some similarity with tyrosine phosphatase proteins but it has probably no phosphatase activity.</text>
</comment>